<feature type="chain" id="PRO_0000274764" description="Phosphonates import ATP-binding protein PhnC 2">
    <location>
        <begin position="1"/>
        <end position="269"/>
    </location>
</feature>
<feature type="domain" description="ABC transporter" evidence="1">
    <location>
        <begin position="2"/>
        <end position="246"/>
    </location>
</feature>
<feature type="region of interest" description="Disordered" evidence="2">
    <location>
        <begin position="246"/>
        <end position="269"/>
    </location>
</feature>
<feature type="binding site" evidence="1">
    <location>
        <begin position="35"/>
        <end position="42"/>
    </location>
    <ligand>
        <name>ATP</name>
        <dbReference type="ChEBI" id="CHEBI:30616"/>
    </ligand>
</feature>
<reference key="1">
    <citation type="journal article" date="2007" name="ISME J.">
        <title>Population level functional diversity in a microbial community revealed by comparative genomic and metagenomic analyses.</title>
        <authorList>
            <person name="Bhaya D."/>
            <person name="Grossman A.R."/>
            <person name="Steunou A.-S."/>
            <person name="Khuri N."/>
            <person name="Cohan F.M."/>
            <person name="Hamamura N."/>
            <person name="Melendrez M.C."/>
            <person name="Bateson M.M."/>
            <person name="Ward D.M."/>
            <person name="Heidelberg J.F."/>
        </authorList>
    </citation>
    <scope>NUCLEOTIDE SEQUENCE [LARGE SCALE GENOMIC DNA]</scope>
    <source>
        <strain>JA-2-3B'a(2-13)</strain>
    </source>
</reference>
<proteinExistence type="inferred from homology"/>
<name>PHNC2_SYNJB</name>
<dbReference type="EC" id="7.3.2.2" evidence="1"/>
<dbReference type="EMBL" id="CP000240">
    <property type="protein sequence ID" value="ABD02434.1"/>
    <property type="molecule type" value="Genomic_DNA"/>
</dbReference>
<dbReference type="RefSeq" id="WP_011433082.1">
    <property type="nucleotide sequence ID" value="NC_007776.1"/>
</dbReference>
<dbReference type="SMR" id="Q2JLH7"/>
<dbReference type="STRING" id="321332.CYB_1467"/>
<dbReference type="KEGG" id="cyb:CYB_1467"/>
<dbReference type="eggNOG" id="COG3638">
    <property type="taxonomic scope" value="Bacteria"/>
</dbReference>
<dbReference type="HOGENOM" id="CLU_000604_1_22_3"/>
<dbReference type="OrthoDB" id="9802264at2"/>
<dbReference type="Proteomes" id="UP000001938">
    <property type="component" value="Chromosome"/>
</dbReference>
<dbReference type="GO" id="GO:0005886">
    <property type="term" value="C:plasma membrane"/>
    <property type="evidence" value="ECO:0007669"/>
    <property type="project" value="UniProtKB-SubCell"/>
</dbReference>
<dbReference type="GO" id="GO:0015416">
    <property type="term" value="F:ABC-type phosphonate transporter activity"/>
    <property type="evidence" value="ECO:0007669"/>
    <property type="project" value="UniProtKB-EC"/>
</dbReference>
<dbReference type="GO" id="GO:0005524">
    <property type="term" value="F:ATP binding"/>
    <property type="evidence" value="ECO:0007669"/>
    <property type="project" value="UniProtKB-KW"/>
</dbReference>
<dbReference type="GO" id="GO:0016887">
    <property type="term" value="F:ATP hydrolysis activity"/>
    <property type="evidence" value="ECO:0007669"/>
    <property type="project" value="InterPro"/>
</dbReference>
<dbReference type="CDD" id="cd03256">
    <property type="entry name" value="ABC_PhnC_transporter"/>
    <property type="match status" value="1"/>
</dbReference>
<dbReference type="Gene3D" id="3.40.50.300">
    <property type="entry name" value="P-loop containing nucleotide triphosphate hydrolases"/>
    <property type="match status" value="1"/>
</dbReference>
<dbReference type="InterPro" id="IPR003593">
    <property type="entry name" value="AAA+_ATPase"/>
</dbReference>
<dbReference type="InterPro" id="IPR003439">
    <property type="entry name" value="ABC_transporter-like_ATP-bd"/>
</dbReference>
<dbReference type="InterPro" id="IPR017871">
    <property type="entry name" value="ABC_transporter-like_CS"/>
</dbReference>
<dbReference type="InterPro" id="IPR012693">
    <property type="entry name" value="ABC_transpr_PhnC"/>
</dbReference>
<dbReference type="InterPro" id="IPR050086">
    <property type="entry name" value="MetN_ABC_transporter-like"/>
</dbReference>
<dbReference type="InterPro" id="IPR027417">
    <property type="entry name" value="P-loop_NTPase"/>
</dbReference>
<dbReference type="NCBIfam" id="TIGR02315">
    <property type="entry name" value="ABC_phnC"/>
    <property type="match status" value="1"/>
</dbReference>
<dbReference type="PANTHER" id="PTHR43166">
    <property type="entry name" value="AMINO ACID IMPORT ATP-BINDING PROTEIN"/>
    <property type="match status" value="1"/>
</dbReference>
<dbReference type="PANTHER" id="PTHR43166:SF6">
    <property type="entry name" value="PHOSPHONATES IMPORT ATP-BINDING PROTEIN PHNC"/>
    <property type="match status" value="1"/>
</dbReference>
<dbReference type="Pfam" id="PF00005">
    <property type="entry name" value="ABC_tran"/>
    <property type="match status" value="1"/>
</dbReference>
<dbReference type="SMART" id="SM00382">
    <property type="entry name" value="AAA"/>
    <property type="match status" value="1"/>
</dbReference>
<dbReference type="SUPFAM" id="SSF52540">
    <property type="entry name" value="P-loop containing nucleoside triphosphate hydrolases"/>
    <property type="match status" value="1"/>
</dbReference>
<dbReference type="PROSITE" id="PS00211">
    <property type="entry name" value="ABC_TRANSPORTER_1"/>
    <property type="match status" value="1"/>
</dbReference>
<dbReference type="PROSITE" id="PS50893">
    <property type="entry name" value="ABC_TRANSPORTER_2"/>
    <property type="match status" value="1"/>
</dbReference>
<dbReference type="PROSITE" id="PS51249">
    <property type="entry name" value="PHNC"/>
    <property type="match status" value="1"/>
</dbReference>
<comment type="function">
    <text evidence="1">Part of the ABC transporter complex PhnCDE involved in phosphonates import. Responsible for energy coupling to the transport system.</text>
</comment>
<comment type="catalytic activity">
    <reaction evidence="1">
        <text>phosphonate(out) + ATP + H2O = phosphonate(in) + ADP + phosphate + H(+)</text>
        <dbReference type="Rhea" id="RHEA:18065"/>
        <dbReference type="ChEBI" id="CHEBI:15377"/>
        <dbReference type="ChEBI" id="CHEBI:15378"/>
        <dbReference type="ChEBI" id="CHEBI:16215"/>
        <dbReference type="ChEBI" id="CHEBI:30616"/>
        <dbReference type="ChEBI" id="CHEBI:43474"/>
        <dbReference type="ChEBI" id="CHEBI:456216"/>
        <dbReference type="EC" id="7.3.2.2"/>
    </reaction>
</comment>
<comment type="subunit">
    <text evidence="1">The complex is composed of two ATP-binding proteins (PhnC), two transmembrane proteins (PhnE) and a solute-binding protein (PhnD).</text>
</comment>
<comment type="subcellular location">
    <subcellularLocation>
        <location evidence="1">Cell inner membrane</location>
        <topology evidence="1">Peripheral membrane protein</topology>
    </subcellularLocation>
</comment>
<comment type="similarity">
    <text evidence="1">Belongs to the ABC transporter superfamily. Phosphonates importer (TC 3.A.1.9.1) family.</text>
</comment>
<sequence length="269" mass="29872">MLRIDSLSKRYPTGDMALKGVTLEVPDGQVMALIGPSGAGKSTLLRCINRLVEPTSGSIWLNGIDLTRLNTRELRQARRKIGMIFQEYALVERLTVMENVLSGQLGYVNFWQSWFRKFPQATIDEAFRLLDRVGLSDFPDKRADALSGGQRQRVGIARALLQNPELLLVDEPTASLDPKTSRQIMRLINELASERGLSVIINIHDVPLAQMFAQRIVGLRFGEVVYDGPPNRLTPSVLNEIYGEEDWNASGPAQDSEENEAVSAGVATH</sequence>
<keyword id="KW-0067">ATP-binding</keyword>
<keyword id="KW-0997">Cell inner membrane</keyword>
<keyword id="KW-1003">Cell membrane</keyword>
<keyword id="KW-0472">Membrane</keyword>
<keyword id="KW-0547">Nucleotide-binding</keyword>
<keyword id="KW-0918">Phosphonate transport</keyword>
<keyword id="KW-1185">Reference proteome</keyword>
<keyword id="KW-1278">Translocase</keyword>
<keyword id="KW-0813">Transport</keyword>
<evidence type="ECO:0000255" key="1">
    <source>
        <dbReference type="HAMAP-Rule" id="MF_01713"/>
    </source>
</evidence>
<evidence type="ECO:0000256" key="2">
    <source>
        <dbReference type="SAM" id="MobiDB-lite"/>
    </source>
</evidence>
<accession>Q2JLH7</accession>
<gene>
    <name evidence="1" type="primary">phnC2</name>
    <name type="synonym">phnC-2</name>
    <name type="ordered locus">CYB_1467</name>
</gene>
<organism>
    <name type="scientific">Synechococcus sp. (strain JA-2-3B'a(2-13))</name>
    <name type="common">Cyanobacteria bacterium Yellowstone B-Prime</name>
    <dbReference type="NCBI Taxonomy" id="321332"/>
    <lineage>
        <taxon>Bacteria</taxon>
        <taxon>Bacillati</taxon>
        <taxon>Cyanobacteriota</taxon>
        <taxon>Cyanophyceae</taxon>
        <taxon>Synechococcales</taxon>
        <taxon>Synechococcaceae</taxon>
        <taxon>Synechococcus</taxon>
    </lineage>
</organism>
<protein>
    <recommendedName>
        <fullName evidence="1">Phosphonates import ATP-binding protein PhnC 2</fullName>
        <ecNumber evidence="1">7.3.2.2</ecNumber>
    </recommendedName>
</protein>